<accession>Q9VFX1</accession>
<sequence length="309" mass="34777">MIFAITFFMGITSTLAAVLEPMSYYQYTQFQAPLSWEDITGKGLKQALDSCQQSFQWQRWNCPSQDFVQKNSKPEENSPNREDVYVAAISMAAIVHTLTKDCANGVIAGCGCTENALNVPCAHEPTKALEQYEKHFGSGSGAIGHNRRVVGALLQRSLEQECRCKQPGAVQGECQEEECVAVLKPFEAIAQDLLQMYDDAIQLEGASSNLKIMWQNIPLDSLVFMQDSPNYCERDATGLWKGTRGRQCSKDGSGSLEERLSCQQLCRVCGYRVRSQHVRTERRCNCKLVWGFRLQCDVCVQLERQYSCY</sequence>
<feature type="signal peptide" evidence="2">
    <location>
        <begin position="1"/>
        <end position="16"/>
    </location>
</feature>
<feature type="chain" id="PRO_0000041480" description="Wnt inhibitor of Dorsal protein">
    <location>
        <begin position="17"/>
        <end position="309"/>
    </location>
</feature>
<feature type="disulfide bond" evidence="6 9">
    <location>
        <begin position="51"/>
        <end position="62"/>
    </location>
</feature>
<feature type="disulfide bond" evidence="6 9">
    <location>
        <begin position="102"/>
        <end position="110"/>
    </location>
</feature>
<feature type="disulfide bond" evidence="6 9">
    <location>
        <begin position="112"/>
        <end position="121"/>
    </location>
</feature>
<feature type="disulfide bond" evidence="6 9">
    <location>
        <begin position="162"/>
        <end position="179"/>
    </location>
</feature>
<feature type="disulfide bond" evidence="6 9">
    <location>
        <begin position="164"/>
        <end position="174"/>
    </location>
</feature>
<feature type="disulfide bond" evidence="1">
    <location>
        <begin position="232"/>
        <end position="269"/>
    </location>
</feature>
<feature type="disulfide bond" evidence="1">
    <location>
        <begin position="248"/>
        <end position="262"/>
    </location>
</feature>
<feature type="disulfide bond" evidence="1">
    <location>
        <begin position="266"/>
        <end position="308"/>
    </location>
</feature>
<feature type="disulfide bond" evidence="1">
    <location>
        <begin position="284"/>
        <end position="299"/>
    </location>
</feature>
<feature type="disulfide bond" evidence="1">
    <location>
        <begin position="286"/>
        <end position="296"/>
    </location>
</feature>
<feature type="helix" evidence="10">
    <location>
        <begin position="36"/>
        <end position="54"/>
    </location>
</feature>
<feature type="strand" evidence="10">
    <location>
        <begin position="58"/>
        <end position="60"/>
    </location>
</feature>
<feature type="helix" evidence="10">
    <location>
        <begin position="64"/>
        <end position="72"/>
    </location>
</feature>
<feature type="helix" evidence="10">
    <location>
        <begin position="81"/>
        <end position="103"/>
    </location>
</feature>
<feature type="helix" evidence="10">
    <location>
        <begin position="125"/>
        <end position="135"/>
    </location>
</feature>
<feature type="helix" evidence="10">
    <location>
        <begin position="141"/>
        <end position="155"/>
    </location>
</feature>
<feature type="strand" evidence="10">
    <location>
        <begin position="158"/>
        <end position="166"/>
    </location>
</feature>
<feature type="turn" evidence="10">
    <location>
        <begin position="171"/>
        <end position="173"/>
    </location>
</feature>
<feature type="strand" evidence="10">
    <location>
        <begin position="177"/>
        <end position="183"/>
    </location>
</feature>
<feature type="helix" evidence="10">
    <location>
        <begin position="186"/>
        <end position="198"/>
    </location>
</feature>
<feature type="strand" evidence="10">
    <location>
        <begin position="208"/>
        <end position="210"/>
    </location>
</feature>
<feature type="turn" evidence="10">
    <location>
        <begin position="214"/>
        <end position="216"/>
    </location>
</feature>
<reference evidence="7" key="1">
    <citation type="journal article" date="2000" name="Science">
        <title>The genome sequence of Drosophila melanogaster.</title>
        <authorList>
            <person name="Adams M.D."/>
            <person name="Celniker S.E."/>
            <person name="Holt R.A."/>
            <person name="Evans C.A."/>
            <person name="Gocayne J.D."/>
            <person name="Amanatides P.G."/>
            <person name="Scherer S.E."/>
            <person name="Li P.W."/>
            <person name="Hoskins R.A."/>
            <person name="Galle R.F."/>
            <person name="George R.A."/>
            <person name="Lewis S.E."/>
            <person name="Richards S."/>
            <person name="Ashburner M."/>
            <person name="Henderson S.N."/>
            <person name="Sutton G.G."/>
            <person name="Wortman J.R."/>
            <person name="Yandell M.D."/>
            <person name="Zhang Q."/>
            <person name="Chen L.X."/>
            <person name="Brandon R.C."/>
            <person name="Rogers Y.-H.C."/>
            <person name="Blazej R.G."/>
            <person name="Champe M."/>
            <person name="Pfeiffer B.D."/>
            <person name="Wan K.H."/>
            <person name="Doyle C."/>
            <person name="Baxter E.G."/>
            <person name="Helt G."/>
            <person name="Nelson C.R."/>
            <person name="Miklos G.L.G."/>
            <person name="Abril J.F."/>
            <person name="Agbayani A."/>
            <person name="An H.-J."/>
            <person name="Andrews-Pfannkoch C."/>
            <person name="Baldwin D."/>
            <person name="Ballew R.M."/>
            <person name="Basu A."/>
            <person name="Baxendale J."/>
            <person name="Bayraktaroglu L."/>
            <person name="Beasley E.M."/>
            <person name="Beeson K.Y."/>
            <person name="Benos P.V."/>
            <person name="Berman B.P."/>
            <person name="Bhandari D."/>
            <person name="Bolshakov S."/>
            <person name="Borkova D."/>
            <person name="Botchan M.R."/>
            <person name="Bouck J."/>
            <person name="Brokstein P."/>
            <person name="Brottier P."/>
            <person name="Burtis K.C."/>
            <person name="Busam D.A."/>
            <person name="Butler H."/>
            <person name="Cadieu E."/>
            <person name="Center A."/>
            <person name="Chandra I."/>
            <person name="Cherry J.M."/>
            <person name="Cawley S."/>
            <person name="Dahlke C."/>
            <person name="Davenport L.B."/>
            <person name="Davies P."/>
            <person name="de Pablos B."/>
            <person name="Delcher A."/>
            <person name="Deng Z."/>
            <person name="Mays A.D."/>
            <person name="Dew I."/>
            <person name="Dietz S.M."/>
            <person name="Dodson K."/>
            <person name="Doup L.E."/>
            <person name="Downes M."/>
            <person name="Dugan-Rocha S."/>
            <person name="Dunkov B.C."/>
            <person name="Dunn P."/>
            <person name="Durbin K.J."/>
            <person name="Evangelista C.C."/>
            <person name="Ferraz C."/>
            <person name="Ferriera S."/>
            <person name="Fleischmann W."/>
            <person name="Fosler C."/>
            <person name="Gabrielian A.E."/>
            <person name="Garg N.S."/>
            <person name="Gelbart W.M."/>
            <person name="Glasser K."/>
            <person name="Glodek A."/>
            <person name="Gong F."/>
            <person name="Gorrell J.H."/>
            <person name="Gu Z."/>
            <person name="Guan P."/>
            <person name="Harris M."/>
            <person name="Harris N.L."/>
            <person name="Harvey D.A."/>
            <person name="Heiman T.J."/>
            <person name="Hernandez J.R."/>
            <person name="Houck J."/>
            <person name="Hostin D."/>
            <person name="Houston K.A."/>
            <person name="Howland T.J."/>
            <person name="Wei M.-H."/>
            <person name="Ibegwam C."/>
            <person name="Jalali M."/>
            <person name="Kalush F."/>
            <person name="Karpen G.H."/>
            <person name="Ke Z."/>
            <person name="Kennison J.A."/>
            <person name="Ketchum K.A."/>
            <person name="Kimmel B.E."/>
            <person name="Kodira C.D."/>
            <person name="Kraft C.L."/>
            <person name="Kravitz S."/>
            <person name="Kulp D."/>
            <person name="Lai Z."/>
            <person name="Lasko P."/>
            <person name="Lei Y."/>
            <person name="Levitsky A.A."/>
            <person name="Li J.H."/>
            <person name="Li Z."/>
            <person name="Liang Y."/>
            <person name="Lin X."/>
            <person name="Liu X."/>
            <person name="Mattei B."/>
            <person name="McIntosh T.C."/>
            <person name="McLeod M.P."/>
            <person name="McPherson D."/>
            <person name="Merkulov G."/>
            <person name="Milshina N.V."/>
            <person name="Mobarry C."/>
            <person name="Morris J."/>
            <person name="Moshrefi A."/>
            <person name="Mount S.M."/>
            <person name="Moy M."/>
            <person name="Murphy B."/>
            <person name="Murphy L."/>
            <person name="Muzny D.M."/>
            <person name="Nelson D.L."/>
            <person name="Nelson D.R."/>
            <person name="Nelson K.A."/>
            <person name="Nixon K."/>
            <person name="Nusskern D.R."/>
            <person name="Pacleb J.M."/>
            <person name="Palazzolo M."/>
            <person name="Pittman G.S."/>
            <person name="Pan S."/>
            <person name="Pollard J."/>
            <person name="Puri V."/>
            <person name="Reese M.G."/>
            <person name="Reinert K."/>
            <person name="Remington K."/>
            <person name="Saunders R.D.C."/>
            <person name="Scheeler F."/>
            <person name="Shen H."/>
            <person name="Shue B.C."/>
            <person name="Siden-Kiamos I."/>
            <person name="Simpson M."/>
            <person name="Skupski M.P."/>
            <person name="Smith T.J."/>
            <person name="Spier E."/>
            <person name="Spradling A.C."/>
            <person name="Stapleton M."/>
            <person name="Strong R."/>
            <person name="Sun E."/>
            <person name="Svirskas R."/>
            <person name="Tector C."/>
            <person name="Turner R."/>
            <person name="Venter E."/>
            <person name="Wang A.H."/>
            <person name="Wang X."/>
            <person name="Wang Z.-Y."/>
            <person name="Wassarman D.A."/>
            <person name="Weinstock G.M."/>
            <person name="Weissenbach J."/>
            <person name="Williams S.M."/>
            <person name="Woodage T."/>
            <person name="Worley K.C."/>
            <person name="Wu D."/>
            <person name="Yang S."/>
            <person name="Yao Q.A."/>
            <person name="Ye J."/>
            <person name="Yeh R.-F."/>
            <person name="Zaveri J.S."/>
            <person name="Zhan M."/>
            <person name="Zhang G."/>
            <person name="Zhao Q."/>
            <person name="Zheng L."/>
            <person name="Zheng X.H."/>
            <person name="Zhong F.N."/>
            <person name="Zhong W."/>
            <person name="Zhou X."/>
            <person name="Zhu S.C."/>
            <person name="Zhu X."/>
            <person name="Smith H.O."/>
            <person name="Gibbs R.A."/>
            <person name="Myers E.W."/>
            <person name="Rubin G.M."/>
            <person name="Venter J.C."/>
        </authorList>
    </citation>
    <scope>NUCLEOTIDE SEQUENCE [LARGE SCALE GENOMIC DNA]</scope>
    <source>
        <strain evidence="3">Berkeley</strain>
    </source>
</reference>
<reference evidence="7" key="2">
    <citation type="journal article" date="2002" name="Genome Biol.">
        <title>Annotation of the Drosophila melanogaster euchromatic genome: a systematic review.</title>
        <authorList>
            <person name="Misra S."/>
            <person name="Crosby M.A."/>
            <person name="Mungall C.J."/>
            <person name="Matthews B.B."/>
            <person name="Campbell K.S."/>
            <person name="Hradecky P."/>
            <person name="Huang Y."/>
            <person name="Kaminker J.S."/>
            <person name="Millburn G.H."/>
            <person name="Prochnik S.E."/>
            <person name="Smith C.D."/>
            <person name="Tupy J.L."/>
            <person name="Whitfield E.J."/>
            <person name="Bayraktaroglu L."/>
            <person name="Berman B.P."/>
            <person name="Bettencourt B.R."/>
            <person name="Celniker S.E."/>
            <person name="de Grey A.D.N.J."/>
            <person name="Drysdale R.A."/>
            <person name="Harris N.L."/>
            <person name="Richter J."/>
            <person name="Russo S."/>
            <person name="Schroeder A.J."/>
            <person name="Shu S.Q."/>
            <person name="Stapleton M."/>
            <person name="Yamada C."/>
            <person name="Ashburner M."/>
            <person name="Gelbart W.M."/>
            <person name="Rubin G.M."/>
            <person name="Lewis S.E."/>
        </authorList>
    </citation>
    <scope>GENOME REANNOTATION</scope>
    <source>
        <strain>Berkeley</strain>
    </source>
</reference>
<reference evidence="7" key="3">
    <citation type="journal article" date="2002" name="Genome Biol.">
        <title>A Drosophila full-length cDNA resource.</title>
        <authorList>
            <person name="Stapleton M."/>
            <person name="Carlson J.W."/>
            <person name="Brokstein P."/>
            <person name="Yu C."/>
            <person name="Champe M."/>
            <person name="George R.A."/>
            <person name="Guarin H."/>
            <person name="Kronmiller B."/>
            <person name="Pacleb J.M."/>
            <person name="Park S."/>
            <person name="Wan K.H."/>
            <person name="Rubin G.M."/>
            <person name="Celniker S.E."/>
        </authorList>
    </citation>
    <scope>NUCLEOTIDE SEQUENCE [LARGE SCALE MRNA]</scope>
    <source>
        <strain evidence="4">Berkeley</strain>
        <tissue evidence="4">Embryo</tissue>
    </source>
</reference>
<reference evidence="7" key="4">
    <citation type="journal article" date="2003" name="Nature">
        <title>Wnt proteins are lipid-modified and can act as stem cell growth factors.</title>
        <authorList>
            <person name="Willert K."/>
            <person name="Brown J.D."/>
            <person name="Danenberg E."/>
            <person name="Duncan A.W."/>
            <person name="Weissman I.L."/>
            <person name="Reya T."/>
            <person name="Yates J.R. III"/>
            <person name="Nusse R."/>
        </authorList>
    </citation>
    <scope>PRELIMINARY PALMITOYLATION</scope>
</reference>
<reference key="5">
    <citation type="journal article" date="2008" name="J. Biol. Chem.">
        <title>Lipid-independent secretion of a Drosophila Wnt protein.</title>
        <authorList>
            <person name="Ching W."/>
            <person name="Hang H.C."/>
            <person name="Nusse R."/>
        </authorList>
    </citation>
    <scope>LACK OF PALMITOYLATION</scope>
</reference>
<reference key="6">
    <citation type="journal article" date="2013" name="Structure">
        <title>structural Studies of Wnts and identification of an LRP6 binding site.</title>
        <authorList>
            <person name="Chu M.L."/>
            <person name="Ahn V.E."/>
            <person name="Choi H.J."/>
            <person name="Daniels D.L."/>
            <person name="Nusse R."/>
            <person name="Weis W.I."/>
        </authorList>
    </citation>
    <scope>X-RAY CRYSTALLOGRAPHY (2.12 ANGSTROMS) OF 31-240</scope>
    <scope>DISULFIDE BONDS</scope>
</reference>
<protein>
    <recommendedName>
        <fullName>Wnt inhibitor of Dorsal protein</fullName>
    </recommendedName>
    <alternativeName>
        <fullName>Protein Wnt-8</fullName>
    </alternativeName>
    <alternativeName>
        <fullName>dWnt-8</fullName>
    </alternativeName>
</protein>
<keyword id="KW-0002">3D-structure</keyword>
<keyword id="KW-0217">Developmental protein</keyword>
<keyword id="KW-1015">Disulfide bond</keyword>
<keyword id="KW-0272">Extracellular matrix</keyword>
<keyword id="KW-1185">Reference proteome</keyword>
<keyword id="KW-0964">Secreted</keyword>
<keyword id="KW-0732">Signal</keyword>
<keyword id="KW-0879">Wnt signaling pathway</keyword>
<comment type="function">
    <text evidence="7">Binds as a ligand to a family of frizzled seven-transmembrane receptors and acts through a cascade of genes on the nucleus.</text>
</comment>
<comment type="subcellular location">
    <subcellularLocation>
        <location>Secreted</location>
        <location>Extracellular space</location>
        <location>Extracellular matrix</location>
    </subcellularLocation>
</comment>
<comment type="similarity">
    <text evidence="7">Belongs to the Wnt family.</text>
</comment>
<comment type="caution">
    <text evidence="5">In contrast to other members of the family, it is not lipidated.</text>
</comment>
<dbReference type="EMBL" id="AE014297">
    <property type="protein sequence ID" value="AAF54924.2"/>
    <property type="molecule type" value="Genomic_DNA"/>
</dbReference>
<dbReference type="EMBL" id="AY071538">
    <property type="protein sequence ID" value="AAL49160.1"/>
    <property type="molecule type" value="mRNA"/>
</dbReference>
<dbReference type="RefSeq" id="NP_650272.1">
    <property type="nucleotide sequence ID" value="NM_142015.2"/>
</dbReference>
<dbReference type="PDB" id="4KRR">
    <property type="method" value="X-ray"/>
    <property type="resolution" value="2.12 A"/>
    <property type="chains" value="A=31-240"/>
</dbReference>
<dbReference type="PDBsum" id="4KRR"/>
<dbReference type="SMR" id="Q9VFX1"/>
<dbReference type="BioGRID" id="66717">
    <property type="interactions" value="9"/>
</dbReference>
<dbReference type="FunCoup" id="Q9VFX1">
    <property type="interactions" value="185"/>
</dbReference>
<dbReference type="IntAct" id="Q9VFX1">
    <property type="interactions" value="2"/>
</dbReference>
<dbReference type="STRING" id="7227.FBpp0082243"/>
<dbReference type="PaxDb" id="7227-FBpp0082243"/>
<dbReference type="DNASU" id="41633"/>
<dbReference type="EnsemblMetazoa" id="FBtr0082775">
    <property type="protein sequence ID" value="FBpp0082243"/>
    <property type="gene ID" value="FBgn0038134"/>
</dbReference>
<dbReference type="GeneID" id="41633"/>
<dbReference type="KEGG" id="dme:Dmel_CG8458"/>
<dbReference type="AGR" id="FB:FBgn0038134"/>
<dbReference type="CTD" id="41633"/>
<dbReference type="FlyBase" id="FBgn0038134">
    <property type="gene designation" value="wntD"/>
</dbReference>
<dbReference type="VEuPathDB" id="VectorBase:FBgn0038134"/>
<dbReference type="eggNOG" id="KOG3913">
    <property type="taxonomic scope" value="Eukaryota"/>
</dbReference>
<dbReference type="HOGENOM" id="CLU_901006_0_0_1"/>
<dbReference type="InParanoid" id="Q9VFX1"/>
<dbReference type="OMA" id="ERRCNCK"/>
<dbReference type="OrthoDB" id="5945655at2759"/>
<dbReference type="PhylomeDB" id="Q9VFX1"/>
<dbReference type="Reactome" id="R-DME-3238698">
    <property type="pathway name" value="WNT ligand biogenesis and trafficking"/>
</dbReference>
<dbReference type="SignaLink" id="Q9VFX1"/>
<dbReference type="BioGRID-ORCS" id="41633">
    <property type="hits" value="0 hits in 3 CRISPR screens"/>
</dbReference>
<dbReference type="EvolutionaryTrace" id="Q9VFX1"/>
<dbReference type="GenomeRNAi" id="41633"/>
<dbReference type="PRO" id="PR:Q9VFX1"/>
<dbReference type="Proteomes" id="UP000000803">
    <property type="component" value="Chromosome 3R"/>
</dbReference>
<dbReference type="Bgee" id="FBgn0038134">
    <property type="expression patterns" value="Expressed in enterocyte of posterior adult midgut epithelium (Drosophila) in digestive tract and 22 other cell types or tissues"/>
</dbReference>
<dbReference type="GO" id="GO:0031012">
    <property type="term" value="C:extracellular matrix"/>
    <property type="evidence" value="ECO:0000303"/>
    <property type="project" value="UniProtKB"/>
</dbReference>
<dbReference type="GO" id="GO:0005576">
    <property type="term" value="C:extracellular region"/>
    <property type="evidence" value="ECO:0000314"/>
    <property type="project" value="FlyBase"/>
</dbReference>
<dbReference type="GO" id="GO:0005615">
    <property type="term" value="C:extracellular space"/>
    <property type="evidence" value="ECO:0000318"/>
    <property type="project" value="GO_Central"/>
</dbReference>
<dbReference type="GO" id="GO:0005125">
    <property type="term" value="F:cytokine activity"/>
    <property type="evidence" value="ECO:0000318"/>
    <property type="project" value="GO_Central"/>
</dbReference>
<dbReference type="GO" id="GO:0005109">
    <property type="term" value="F:frizzled binding"/>
    <property type="evidence" value="ECO:0000353"/>
    <property type="project" value="FlyBase"/>
</dbReference>
<dbReference type="GO" id="GO:0060070">
    <property type="term" value="P:canonical Wnt signaling pathway"/>
    <property type="evidence" value="ECO:0000318"/>
    <property type="project" value="GO_Central"/>
</dbReference>
<dbReference type="GO" id="GO:0045165">
    <property type="term" value="P:cell fate commitment"/>
    <property type="evidence" value="ECO:0000318"/>
    <property type="project" value="GO_Central"/>
</dbReference>
<dbReference type="GO" id="GO:0050830">
    <property type="term" value="P:defense response to Gram-positive bacterium"/>
    <property type="evidence" value="ECO:0000315"/>
    <property type="project" value="FlyBase"/>
</dbReference>
<dbReference type="GO" id="GO:0008354">
    <property type="term" value="P:germ cell migration"/>
    <property type="evidence" value="ECO:0000315"/>
    <property type="project" value="FlyBase"/>
</dbReference>
<dbReference type="GO" id="GO:0030182">
    <property type="term" value="P:neuron differentiation"/>
    <property type="evidence" value="ECO:0000318"/>
    <property type="project" value="GO_Central"/>
</dbReference>
<dbReference type="GO" id="GO:0035567">
    <property type="term" value="P:non-canonical Wnt signaling pathway"/>
    <property type="evidence" value="ECO:0000315"/>
    <property type="project" value="FlyBase"/>
</dbReference>
<dbReference type="GO" id="GO:0045995">
    <property type="term" value="P:regulation of embryonic development"/>
    <property type="evidence" value="ECO:0000315"/>
    <property type="project" value="FlyBase"/>
</dbReference>
<dbReference type="GO" id="GO:0007370">
    <property type="term" value="P:ventral furrow formation"/>
    <property type="evidence" value="ECO:0000315"/>
    <property type="project" value="FlyBase"/>
</dbReference>
<dbReference type="CDD" id="cd19340">
    <property type="entry name" value="Wnt_Wnt8"/>
    <property type="match status" value="1"/>
</dbReference>
<dbReference type="FunFam" id="3.30.2460.20:FF:000006">
    <property type="entry name" value="Protein Wnt"/>
    <property type="match status" value="1"/>
</dbReference>
<dbReference type="Gene3D" id="3.30.2460.20">
    <property type="match status" value="1"/>
</dbReference>
<dbReference type="InterPro" id="IPR005817">
    <property type="entry name" value="Wnt"/>
</dbReference>
<dbReference type="InterPro" id="IPR043158">
    <property type="entry name" value="Wnt_C"/>
</dbReference>
<dbReference type="PANTHER" id="PTHR12027:SF81">
    <property type="entry name" value="WNT INHIBITOR OF DORSAL PROTEIN"/>
    <property type="match status" value="1"/>
</dbReference>
<dbReference type="PANTHER" id="PTHR12027">
    <property type="entry name" value="WNT RELATED"/>
    <property type="match status" value="1"/>
</dbReference>
<dbReference type="Pfam" id="PF00110">
    <property type="entry name" value="wnt"/>
    <property type="match status" value="1"/>
</dbReference>
<dbReference type="PRINTS" id="PR01349">
    <property type="entry name" value="WNTPROTEIN"/>
</dbReference>
<dbReference type="SMART" id="SM00097">
    <property type="entry name" value="WNT1"/>
    <property type="match status" value="1"/>
</dbReference>
<proteinExistence type="evidence at protein level"/>
<evidence type="ECO:0000250" key="1">
    <source>
        <dbReference type="UniProtKB" id="P28026"/>
    </source>
</evidence>
<evidence type="ECO:0000255" key="2"/>
<evidence type="ECO:0000269" key="3">
    <source>
    </source>
</evidence>
<evidence type="ECO:0000269" key="4">
    <source>
    </source>
</evidence>
<evidence type="ECO:0000269" key="5">
    <source>
    </source>
</evidence>
<evidence type="ECO:0000269" key="6">
    <source>
    </source>
</evidence>
<evidence type="ECO:0000305" key="7"/>
<evidence type="ECO:0000312" key="8">
    <source>
        <dbReference type="EMBL" id="AAF54924.2"/>
    </source>
</evidence>
<evidence type="ECO:0007744" key="9">
    <source>
        <dbReference type="PDB" id="4KRR"/>
    </source>
</evidence>
<evidence type="ECO:0007829" key="10">
    <source>
        <dbReference type="PDB" id="4KRR"/>
    </source>
</evidence>
<gene>
    <name type="primary">wntD</name>
    <name type="synonym">Wnt8</name>
    <name type="ORF">CG8458</name>
</gene>
<name>WNT8_DROME</name>
<organism evidence="8">
    <name type="scientific">Drosophila melanogaster</name>
    <name type="common">Fruit fly</name>
    <dbReference type="NCBI Taxonomy" id="7227"/>
    <lineage>
        <taxon>Eukaryota</taxon>
        <taxon>Metazoa</taxon>
        <taxon>Ecdysozoa</taxon>
        <taxon>Arthropoda</taxon>
        <taxon>Hexapoda</taxon>
        <taxon>Insecta</taxon>
        <taxon>Pterygota</taxon>
        <taxon>Neoptera</taxon>
        <taxon>Endopterygota</taxon>
        <taxon>Diptera</taxon>
        <taxon>Brachycera</taxon>
        <taxon>Muscomorpha</taxon>
        <taxon>Ephydroidea</taxon>
        <taxon>Drosophilidae</taxon>
        <taxon>Drosophila</taxon>
        <taxon>Sophophora</taxon>
    </lineage>
</organism>